<name>4HYPE_CERS1</name>
<proteinExistence type="evidence at protein level"/>
<organism>
    <name type="scientific">Cereibacter sphaeroides (strain ATCC 17029 / ATH 2.4.9)</name>
    <name type="common">Rhodobacter sphaeroides</name>
    <dbReference type="NCBI Taxonomy" id="349101"/>
    <lineage>
        <taxon>Bacteria</taxon>
        <taxon>Pseudomonadati</taxon>
        <taxon>Pseudomonadota</taxon>
        <taxon>Alphaproteobacteria</taxon>
        <taxon>Rhodobacterales</taxon>
        <taxon>Paracoccaceae</taxon>
        <taxon>Cereibacter</taxon>
    </lineage>
</organism>
<sequence length="337" mass="36862">MRVQDVYNVIYTHTEGEPLCIIYSGVPYPAGSTILEKRAFLEENYDWLRKALMREPRGHADMFGVFLTPPSSRDYDAGLIYIDGKEYSHMCGHGTIAVAMAMVANGLVARDPSGLTRIRFETTAGLVVAEVAHEDDRVLWTRFENVPAYVAAQDIAFELPGYGPLKADLVWGGNYFGIIDLRGTSLRIAPENGSELSRMGLIAREEIRKKVTVQHPTEAHINNLNFVTFWHEPTIEGCLYKNVHVFSAGQLDRSPGGTGTSAMMAYFEARGVIGLNQPITSEGLLGSGTFEGCLIGETTLGTVRAVRPTVKGTAGMLGTASWTINREDPVDAGFLVL</sequence>
<evidence type="ECO:0000250" key="1">
    <source>
        <dbReference type="UniProtKB" id="Q4KGU2"/>
    </source>
</evidence>
<evidence type="ECO:0000269" key="2">
    <source>
    </source>
</evidence>
<evidence type="ECO:0000303" key="3">
    <source>
    </source>
</evidence>
<evidence type="ECO:0000305" key="4"/>
<evidence type="ECO:0000305" key="5">
    <source>
    </source>
</evidence>
<evidence type="ECO:0000312" key="6">
    <source>
        <dbReference type="EMBL" id="ABN78264.1"/>
    </source>
</evidence>
<dbReference type="EC" id="5.1.1.8" evidence="2"/>
<dbReference type="EMBL" id="CP000578">
    <property type="protein sequence ID" value="ABN78264.1"/>
    <property type="molecule type" value="Genomic_DNA"/>
</dbReference>
<dbReference type="RefSeq" id="WP_011842139.1">
    <property type="nucleotide sequence ID" value="NC_009050.1"/>
</dbReference>
<dbReference type="SMR" id="A3PPJ8"/>
<dbReference type="KEGG" id="rsh:Rsph17029_3164"/>
<dbReference type="HOGENOM" id="CLU_036729_0_0_5"/>
<dbReference type="GO" id="GO:0047580">
    <property type="term" value="F:4-hydroxyproline epimerase activity"/>
    <property type="evidence" value="ECO:0007669"/>
    <property type="project" value="UniProtKB-EC"/>
</dbReference>
<dbReference type="Gene3D" id="3.10.310.10">
    <property type="entry name" value="Diaminopimelate Epimerase, Chain A, domain 1"/>
    <property type="match status" value="2"/>
</dbReference>
<dbReference type="InterPro" id="IPR008794">
    <property type="entry name" value="Pro_racemase_fam"/>
</dbReference>
<dbReference type="PANTHER" id="PTHR33442:SF5">
    <property type="entry name" value="BIFUNCTIONAL TRANS-3-HYDROXY-L-PROLINE DEHYDRATASE_2-EPIMERASE"/>
    <property type="match status" value="1"/>
</dbReference>
<dbReference type="PANTHER" id="PTHR33442">
    <property type="entry name" value="TRANS-3-HYDROXY-L-PROLINE DEHYDRATASE"/>
    <property type="match status" value="1"/>
</dbReference>
<dbReference type="Pfam" id="PF05544">
    <property type="entry name" value="Pro_racemase"/>
    <property type="match status" value="1"/>
</dbReference>
<dbReference type="PIRSF" id="PIRSF029792">
    <property type="entry name" value="Pro_racemase"/>
    <property type="match status" value="1"/>
</dbReference>
<dbReference type="SFLD" id="SFLDS00028">
    <property type="entry name" value="Proline_Racemase"/>
    <property type="match status" value="1"/>
</dbReference>
<dbReference type="SUPFAM" id="SSF54506">
    <property type="entry name" value="Diaminopimelate epimerase-like"/>
    <property type="match status" value="1"/>
</dbReference>
<reference key="1">
    <citation type="submission" date="2007-02" db="EMBL/GenBank/DDBJ databases">
        <title>Complete sequence of chromosome 2 of Rhodobacter sphaeroides ATCC 17029.</title>
        <authorList>
            <person name="Copeland A."/>
            <person name="Lucas S."/>
            <person name="Lapidus A."/>
            <person name="Barry K."/>
            <person name="Detter J.C."/>
            <person name="Glavina del Rio T."/>
            <person name="Hammon N."/>
            <person name="Israni S."/>
            <person name="Dalin E."/>
            <person name="Tice H."/>
            <person name="Pitluck S."/>
            <person name="Kiss H."/>
            <person name="Brettin T."/>
            <person name="Bruce D."/>
            <person name="Han C."/>
            <person name="Tapia R."/>
            <person name="Gilna P."/>
            <person name="Schmutz J."/>
            <person name="Larimer F."/>
            <person name="Land M."/>
            <person name="Hauser L."/>
            <person name="Kyrpides N."/>
            <person name="Mikhailova N."/>
            <person name="Richardson P."/>
            <person name="Mackenzie C."/>
            <person name="Choudhary M."/>
            <person name="Donohue T.J."/>
            <person name="Kaplan S."/>
        </authorList>
    </citation>
    <scope>NUCLEOTIDE SEQUENCE [LARGE SCALE GENOMIC DNA]</scope>
    <source>
        <strain>ATCC 17029 / ATH 2.4.9</strain>
    </source>
</reference>
<reference key="2">
    <citation type="journal article" date="2014" name="Elife">
        <title>Prediction and characterization of enzymatic activities guided by sequence similarity and genome neighborhood networks.</title>
        <authorList>
            <person name="Zhao S."/>
            <person name="Sakai A."/>
            <person name="Zhang X."/>
            <person name="Vetting M.W."/>
            <person name="Kumar R."/>
            <person name="Hillerich B."/>
            <person name="San Francisco B."/>
            <person name="Solbiati J."/>
            <person name="Steves A."/>
            <person name="Brown S."/>
            <person name="Akiva E."/>
            <person name="Barber A."/>
            <person name="Seidel R.D."/>
            <person name="Babbitt P.C."/>
            <person name="Almo S.C."/>
            <person name="Gerlt J.A."/>
            <person name="Jacobson M.P."/>
        </authorList>
    </citation>
    <scope>FUNCTION</scope>
    <scope>CATALYTIC ACTIVITY</scope>
</reference>
<feature type="chain" id="PRO_0000432256" description="4-hydroxyproline 2-epimerase">
    <location>
        <begin position="1"/>
        <end position="337"/>
    </location>
</feature>
<feature type="active site" description="Proton acceptor" evidence="1">
    <location>
        <position position="91"/>
    </location>
</feature>
<feature type="binding site" evidence="1">
    <location>
        <begin position="92"/>
        <end position="93"/>
    </location>
    <ligand>
        <name>substrate</name>
    </ligand>
</feature>
<feature type="binding site" evidence="1">
    <location>
        <position position="252"/>
    </location>
    <ligand>
        <name>substrate</name>
    </ligand>
</feature>
<feature type="binding site" evidence="1">
    <location>
        <begin position="257"/>
        <end position="258"/>
    </location>
    <ligand>
        <name>substrate</name>
    </ligand>
</feature>
<accession>A3PPJ8</accession>
<keyword id="KW-0413">Isomerase</keyword>
<gene>
    <name evidence="6" type="ordered locus">Rsph17029_3164</name>
</gene>
<comment type="function">
    <text evidence="2 5">Catalyzes the epimerization of trans-4-hydroxy-L-proline (t4LHyp) to cis-4-hydroxy-D-proline (c4DHyp). Is likely involved in a degradation pathway that converts t4LHyp to alpha-ketoglutarate. Displays no proline racemase activity.</text>
</comment>
<comment type="catalytic activity">
    <reaction evidence="2">
        <text>trans-4-hydroxy-L-proline = cis-4-hydroxy-D-proline</text>
        <dbReference type="Rhea" id="RHEA:21152"/>
        <dbReference type="ChEBI" id="CHEBI:57690"/>
        <dbReference type="ChEBI" id="CHEBI:58375"/>
        <dbReference type="EC" id="5.1.1.8"/>
    </reaction>
</comment>
<comment type="similarity">
    <text evidence="4">Belongs to the proline racemase family.</text>
</comment>
<protein>
    <recommendedName>
        <fullName evidence="3">4-hydroxyproline 2-epimerase</fullName>
        <shortName>4Hyp 2-epimerase</shortName>
        <shortName evidence="3">4HypE</shortName>
        <ecNumber evidence="2">5.1.1.8</ecNumber>
    </recommendedName>
</protein>